<geneLocation type="chloroplast"/>
<protein>
    <recommendedName>
        <fullName>Photosystem I reaction center subunit IX</fullName>
    </recommendedName>
    <alternativeName>
        <fullName>PSI-J</fullName>
    </alternativeName>
</protein>
<reference key="1">
    <citation type="journal article" date="2004" name="Plant Physiol.">
        <title>A comparison of rice chloroplast genomes.</title>
        <authorList>
            <person name="Tang J."/>
            <person name="Xia H."/>
            <person name="Cao M."/>
            <person name="Zhang X."/>
            <person name="Zeng W."/>
            <person name="Hu S."/>
            <person name="Tong W."/>
            <person name="Wang J."/>
            <person name="Wang J."/>
            <person name="Yu J."/>
            <person name="Yang H."/>
            <person name="Zhu L."/>
        </authorList>
    </citation>
    <scope>NUCLEOTIDE SEQUENCE [LARGE SCALE GENOMIC DNA]</scope>
    <source>
        <strain>cv. PA64s</strain>
    </source>
</reference>
<name>PSAJ_ORYSA</name>
<feature type="chain" id="PRO_0000288990" description="Photosystem I reaction center subunit IX">
    <location>
        <begin position="1"/>
        <end position="44"/>
    </location>
</feature>
<feature type="transmembrane region" description="Helical" evidence="2">
    <location>
        <begin position="7"/>
        <end position="27"/>
    </location>
</feature>
<comment type="function">
    <text evidence="1">May help in the organization of the PsaE and PsaF subunits.</text>
</comment>
<comment type="subcellular location">
    <subcellularLocation>
        <location evidence="1">Plastid</location>
        <location evidence="1">Chloroplast thylakoid membrane</location>
        <topology evidence="1">Single-pass membrane protein</topology>
    </subcellularLocation>
</comment>
<comment type="similarity">
    <text evidence="3">Belongs to the PsaJ family.</text>
</comment>
<organism>
    <name type="scientific">Oryza sativa</name>
    <name type="common">Rice</name>
    <dbReference type="NCBI Taxonomy" id="4530"/>
    <lineage>
        <taxon>Eukaryota</taxon>
        <taxon>Viridiplantae</taxon>
        <taxon>Streptophyta</taxon>
        <taxon>Embryophyta</taxon>
        <taxon>Tracheophyta</taxon>
        <taxon>Spermatophyta</taxon>
        <taxon>Magnoliopsida</taxon>
        <taxon>Liliopsida</taxon>
        <taxon>Poales</taxon>
        <taxon>Poaceae</taxon>
        <taxon>BOP clade</taxon>
        <taxon>Oryzoideae</taxon>
        <taxon>Oryzeae</taxon>
        <taxon>Oryzinae</taxon>
        <taxon>Oryza</taxon>
    </lineage>
</organism>
<evidence type="ECO:0000250" key="1"/>
<evidence type="ECO:0000255" key="2"/>
<evidence type="ECO:0000305" key="3"/>
<proteinExistence type="inferred from homology"/>
<sequence length="44" mass="4979">MRDIKTYLSVAPVLSTLWFGALAGLLIEINRLFPDALSFPFFSF</sequence>
<accession>P0C373</accession>
<gene>
    <name type="primary">psaJ</name>
</gene>
<dbReference type="EMBL" id="AY522331">
    <property type="status" value="NOT_ANNOTATED_CDS"/>
    <property type="molecule type" value="Genomic_DNA"/>
</dbReference>
<dbReference type="RefSeq" id="YP_009305324.1">
    <property type="nucleotide sequence ID" value="NC_031333.1"/>
</dbReference>
<dbReference type="SMR" id="P0C373"/>
<dbReference type="GeneID" id="29141392"/>
<dbReference type="GO" id="GO:0009535">
    <property type="term" value="C:chloroplast thylakoid membrane"/>
    <property type="evidence" value="ECO:0007669"/>
    <property type="project" value="UniProtKB-SubCell"/>
</dbReference>
<dbReference type="GO" id="GO:0009522">
    <property type="term" value="C:photosystem I"/>
    <property type="evidence" value="ECO:0007669"/>
    <property type="project" value="UniProtKB-KW"/>
</dbReference>
<dbReference type="GO" id="GO:0009536">
    <property type="term" value="C:plastid"/>
    <property type="evidence" value="ECO:0000305"/>
    <property type="project" value="Gramene"/>
</dbReference>
<dbReference type="GO" id="GO:0015979">
    <property type="term" value="P:photosynthesis"/>
    <property type="evidence" value="ECO:0007669"/>
    <property type="project" value="UniProtKB-UniRule"/>
</dbReference>
<dbReference type="FunFam" id="1.20.5.510:FF:000001">
    <property type="entry name" value="Photosystem I reaction center subunit IX"/>
    <property type="match status" value="1"/>
</dbReference>
<dbReference type="Gene3D" id="1.20.5.510">
    <property type="entry name" value="Single helix bin"/>
    <property type="match status" value="1"/>
</dbReference>
<dbReference type="HAMAP" id="MF_00522">
    <property type="entry name" value="PSI_PsaJ"/>
    <property type="match status" value="1"/>
</dbReference>
<dbReference type="InterPro" id="IPR002615">
    <property type="entry name" value="PSI_PsaJ"/>
</dbReference>
<dbReference type="InterPro" id="IPR036062">
    <property type="entry name" value="PSI_PsaJ_sf"/>
</dbReference>
<dbReference type="PANTHER" id="PTHR36082">
    <property type="match status" value="1"/>
</dbReference>
<dbReference type="PANTHER" id="PTHR36082:SF2">
    <property type="entry name" value="PHOTOSYSTEM I REACTION CENTER SUBUNIT IX"/>
    <property type="match status" value="1"/>
</dbReference>
<dbReference type="Pfam" id="PF01701">
    <property type="entry name" value="PSI_PsaJ"/>
    <property type="match status" value="1"/>
</dbReference>
<dbReference type="SUPFAM" id="SSF81544">
    <property type="entry name" value="Subunit IX of photosystem I reaction centre, PsaJ"/>
    <property type="match status" value="1"/>
</dbReference>
<keyword id="KW-0150">Chloroplast</keyword>
<keyword id="KW-0472">Membrane</keyword>
<keyword id="KW-0602">Photosynthesis</keyword>
<keyword id="KW-0603">Photosystem I</keyword>
<keyword id="KW-0934">Plastid</keyword>
<keyword id="KW-0793">Thylakoid</keyword>
<keyword id="KW-0812">Transmembrane</keyword>
<keyword id="KW-1133">Transmembrane helix</keyword>